<name>MTNB_GLUOX</name>
<evidence type="ECO:0000255" key="1">
    <source>
        <dbReference type="HAMAP-Rule" id="MF_01677"/>
    </source>
</evidence>
<organism>
    <name type="scientific">Gluconobacter oxydans (strain 621H)</name>
    <name type="common">Gluconobacter suboxydans</name>
    <dbReference type="NCBI Taxonomy" id="290633"/>
    <lineage>
        <taxon>Bacteria</taxon>
        <taxon>Pseudomonadati</taxon>
        <taxon>Pseudomonadota</taxon>
        <taxon>Alphaproteobacteria</taxon>
        <taxon>Acetobacterales</taxon>
        <taxon>Acetobacteraceae</taxon>
        <taxon>Gluconobacter</taxon>
    </lineage>
</organism>
<reference key="1">
    <citation type="journal article" date="2005" name="Nat. Biotechnol.">
        <title>Complete genome sequence of the acetic acid bacterium Gluconobacter oxydans.</title>
        <authorList>
            <person name="Prust C."/>
            <person name="Hoffmeister M."/>
            <person name="Liesegang H."/>
            <person name="Wiezer A."/>
            <person name="Fricke W.F."/>
            <person name="Ehrenreich A."/>
            <person name="Gottschalk G."/>
            <person name="Deppenmeier U."/>
        </authorList>
    </citation>
    <scope>NUCLEOTIDE SEQUENCE [LARGE SCALE GENOMIC DNA]</scope>
    <source>
        <strain>621H</strain>
    </source>
</reference>
<proteinExistence type="inferred from homology"/>
<gene>
    <name evidence="1" type="primary">mtnB</name>
    <name type="ordered locus">GOX1242</name>
</gene>
<feature type="chain" id="PRO_0000357082" description="Methylthioribulose-1-phosphate dehydratase">
    <location>
        <begin position="1"/>
        <end position="208"/>
    </location>
</feature>
<feature type="binding site" evidence="1">
    <location>
        <position position="101"/>
    </location>
    <ligand>
        <name>Zn(2+)</name>
        <dbReference type="ChEBI" id="CHEBI:29105"/>
    </ligand>
</feature>
<feature type="binding site" evidence="1">
    <location>
        <position position="103"/>
    </location>
    <ligand>
        <name>Zn(2+)</name>
        <dbReference type="ChEBI" id="CHEBI:29105"/>
    </ligand>
</feature>
<sequence length="208" mass="22610">MQNLKVDESWGNACRQIVQAGQRMDQRGWVPATAGNLSCRLPDGRIAITRSGGHKGFLTDSDVIEITPDGVPVDPANRASAETLLHTQLYAHDPAIGAVLHGHSVAATILSMDEPSDAITLAGYEVLKVFEGQTTHDTSLELPLFHNDQDIARLATVVAPKLSDMRLGYLIRGHGVYVWGKDMFTALARLEGLEFLLACELARLQKKA</sequence>
<comment type="function">
    <text evidence="1">Catalyzes the dehydration of methylthioribulose-1-phosphate (MTRu-1-P) into 2,3-diketo-5-methylthiopentyl-1-phosphate (DK-MTP-1-P).</text>
</comment>
<comment type="catalytic activity">
    <reaction evidence="1">
        <text>5-(methylsulfanyl)-D-ribulose 1-phosphate = 5-methylsulfanyl-2,3-dioxopentyl phosphate + H2O</text>
        <dbReference type="Rhea" id="RHEA:15549"/>
        <dbReference type="ChEBI" id="CHEBI:15377"/>
        <dbReference type="ChEBI" id="CHEBI:58548"/>
        <dbReference type="ChEBI" id="CHEBI:58828"/>
        <dbReference type="EC" id="4.2.1.109"/>
    </reaction>
</comment>
<comment type="cofactor">
    <cofactor evidence="1">
        <name>Zn(2+)</name>
        <dbReference type="ChEBI" id="CHEBI:29105"/>
    </cofactor>
    <text evidence="1">Binds 1 zinc ion per subunit.</text>
</comment>
<comment type="pathway">
    <text evidence="1">Amino-acid biosynthesis; L-methionine biosynthesis via salvage pathway; L-methionine from S-methyl-5-thio-alpha-D-ribose 1-phosphate: step 2/6.</text>
</comment>
<comment type="similarity">
    <text evidence="1">Belongs to the aldolase class II family. MtnB subfamily.</text>
</comment>
<protein>
    <recommendedName>
        <fullName evidence="1">Methylthioribulose-1-phosphate dehydratase</fullName>
        <shortName evidence="1">MTRu-1-P dehydratase</shortName>
        <ecNumber evidence="1">4.2.1.109</ecNumber>
    </recommendedName>
</protein>
<accession>Q5FRJ3</accession>
<dbReference type="EC" id="4.2.1.109" evidence="1"/>
<dbReference type="EMBL" id="CP000009">
    <property type="protein sequence ID" value="AAW61003.1"/>
    <property type="molecule type" value="Genomic_DNA"/>
</dbReference>
<dbReference type="RefSeq" id="WP_011252795.1">
    <property type="nucleotide sequence ID" value="NC_006677.1"/>
</dbReference>
<dbReference type="SMR" id="Q5FRJ3"/>
<dbReference type="STRING" id="290633.GOX1242"/>
<dbReference type="KEGG" id="gox:GOX1242"/>
<dbReference type="eggNOG" id="COG0235">
    <property type="taxonomic scope" value="Bacteria"/>
</dbReference>
<dbReference type="HOGENOM" id="CLU_006033_4_1_5"/>
<dbReference type="UniPathway" id="UPA00904">
    <property type="reaction ID" value="UER00875"/>
</dbReference>
<dbReference type="Proteomes" id="UP000006375">
    <property type="component" value="Chromosome"/>
</dbReference>
<dbReference type="GO" id="GO:0005829">
    <property type="term" value="C:cytosol"/>
    <property type="evidence" value="ECO:0007669"/>
    <property type="project" value="TreeGrafter"/>
</dbReference>
<dbReference type="GO" id="GO:0016832">
    <property type="term" value="F:aldehyde-lyase activity"/>
    <property type="evidence" value="ECO:0007669"/>
    <property type="project" value="TreeGrafter"/>
</dbReference>
<dbReference type="GO" id="GO:0046570">
    <property type="term" value="F:methylthioribulose 1-phosphate dehydratase activity"/>
    <property type="evidence" value="ECO:0007669"/>
    <property type="project" value="UniProtKB-UniRule"/>
</dbReference>
<dbReference type="GO" id="GO:0008270">
    <property type="term" value="F:zinc ion binding"/>
    <property type="evidence" value="ECO:0007669"/>
    <property type="project" value="UniProtKB-UniRule"/>
</dbReference>
<dbReference type="GO" id="GO:0019509">
    <property type="term" value="P:L-methionine salvage from methylthioadenosine"/>
    <property type="evidence" value="ECO:0007669"/>
    <property type="project" value="UniProtKB-UniRule"/>
</dbReference>
<dbReference type="GO" id="GO:0019323">
    <property type="term" value="P:pentose catabolic process"/>
    <property type="evidence" value="ECO:0007669"/>
    <property type="project" value="TreeGrafter"/>
</dbReference>
<dbReference type="Gene3D" id="3.40.225.10">
    <property type="entry name" value="Class II aldolase/adducin N-terminal domain"/>
    <property type="match status" value="1"/>
</dbReference>
<dbReference type="HAMAP" id="MF_01677">
    <property type="entry name" value="Salvage_MtnB"/>
    <property type="match status" value="1"/>
</dbReference>
<dbReference type="InterPro" id="IPR050197">
    <property type="entry name" value="Aldolase_class_II_sugar_metab"/>
</dbReference>
<dbReference type="InterPro" id="IPR001303">
    <property type="entry name" value="Aldolase_II/adducin_N"/>
</dbReference>
<dbReference type="InterPro" id="IPR036409">
    <property type="entry name" value="Aldolase_II/adducin_N_sf"/>
</dbReference>
<dbReference type="InterPro" id="IPR017714">
    <property type="entry name" value="MethylthioRu-1-P_deHdtase_MtnB"/>
</dbReference>
<dbReference type="NCBIfam" id="NF006672">
    <property type="entry name" value="PRK09220.1"/>
    <property type="match status" value="1"/>
</dbReference>
<dbReference type="NCBIfam" id="TIGR03328">
    <property type="entry name" value="salvage_mtnB"/>
    <property type="match status" value="1"/>
</dbReference>
<dbReference type="PANTHER" id="PTHR22789:SF0">
    <property type="entry name" value="3-OXO-TETRONATE 4-PHOSPHATE DECARBOXYLASE-RELATED"/>
    <property type="match status" value="1"/>
</dbReference>
<dbReference type="PANTHER" id="PTHR22789">
    <property type="entry name" value="FUCULOSE PHOSPHATE ALDOLASE"/>
    <property type="match status" value="1"/>
</dbReference>
<dbReference type="Pfam" id="PF00596">
    <property type="entry name" value="Aldolase_II"/>
    <property type="match status" value="1"/>
</dbReference>
<dbReference type="SMART" id="SM01007">
    <property type="entry name" value="Aldolase_II"/>
    <property type="match status" value="1"/>
</dbReference>
<dbReference type="SUPFAM" id="SSF53639">
    <property type="entry name" value="AraD/HMP-PK domain-like"/>
    <property type="match status" value="1"/>
</dbReference>
<keyword id="KW-0028">Amino-acid biosynthesis</keyword>
<keyword id="KW-0456">Lyase</keyword>
<keyword id="KW-0479">Metal-binding</keyword>
<keyword id="KW-0486">Methionine biosynthesis</keyword>
<keyword id="KW-1185">Reference proteome</keyword>
<keyword id="KW-0862">Zinc</keyword>